<keyword id="KW-0004">4Fe-4S</keyword>
<keyword id="KW-0963">Cytoplasm</keyword>
<keyword id="KW-0408">Iron</keyword>
<keyword id="KW-0411">Iron-sulfur</keyword>
<keyword id="KW-0479">Metal-binding</keyword>
<keyword id="KW-0560">Oxidoreductase</keyword>
<keyword id="KW-1185">Reference proteome</keyword>
<proteinExistence type="inferred from homology"/>
<sequence length="548" mass="58819">MFCFQCQETAKNQGCTVKGVCGKPEETADLQDLLIYVCKGIAIYGEALNAAGTLDREAAHFICRALFTTITNVAWDDDVLVDRIKEGLAVRDAVKAKAGEAVSGSLPDCATWASEDKAAIMAKALSDEVRITTMANEDVRSLRELLILGCKGVAAYTDHAAILGYEKDDIYAFLMEALASTTKELSVDDMIGLVMKAGETAVAAMALLDEANTATYGHPEITEVNIGVGKNPGILISGHDLKDMEELLRQTEGTGVDVYTHGEMLPANYYPAFKKYSHFIGNYGGSWWHQNKDFESFNGAILLTTNCLIPIKGDNTYKDRLFTTGVVNYPGAAHIGDRPDGGAKDFSPIIERAKTCAPPTEIETGTIVGGFAHHQVLALADKVVDAVKSGAIKRFVVMAGCDGRMKSRSYFTEVAEALPKDTVILTAGCAKYRYNKLNLGDIGGIPRVLDAGQCNDSYSLAVIALKLKEVFGLADINDLPISYDIAWYEQKAVAVLLALLFLGVKGIRLGPTLPAFLSPTVAGVLVDKFDIKPIGTVADDVAAMMAGK</sequence>
<feature type="chain" id="PRO_1000092334" description="Hydroxylamine reductase">
    <location>
        <begin position="1"/>
        <end position="548"/>
    </location>
</feature>
<feature type="binding site" evidence="1">
    <location>
        <position position="3"/>
    </location>
    <ligand>
        <name>[4Fe-4S] cluster</name>
        <dbReference type="ChEBI" id="CHEBI:49883"/>
    </ligand>
</feature>
<feature type="binding site" evidence="1">
    <location>
        <position position="6"/>
    </location>
    <ligand>
        <name>[4Fe-4S] cluster</name>
        <dbReference type="ChEBI" id="CHEBI:49883"/>
    </ligand>
</feature>
<feature type="binding site" evidence="1">
    <location>
        <position position="15"/>
    </location>
    <ligand>
        <name>[4Fe-4S] cluster</name>
        <dbReference type="ChEBI" id="CHEBI:49883"/>
    </ligand>
</feature>
<feature type="binding site" evidence="1">
    <location>
        <position position="21"/>
    </location>
    <ligand>
        <name>[4Fe-4S] cluster</name>
        <dbReference type="ChEBI" id="CHEBI:49883"/>
    </ligand>
</feature>
<feature type="binding site" evidence="1">
    <location>
        <position position="239"/>
    </location>
    <ligand>
        <name>hybrid [4Fe-2O-2S] cluster</name>
        <dbReference type="ChEBI" id="CHEBI:60519"/>
    </ligand>
</feature>
<feature type="binding site" evidence="1">
    <location>
        <position position="263"/>
    </location>
    <ligand>
        <name>hybrid [4Fe-2O-2S] cluster</name>
        <dbReference type="ChEBI" id="CHEBI:60519"/>
    </ligand>
</feature>
<feature type="binding site" evidence="1">
    <location>
        <position position="307"/>
    </location>
    <ligand>
        <name>hybrid [4Fe-2O-2S] cluster</name>
        <dbReference type="ChEBI" id="CHEBI:60519"/>
    </ligand>
</feature>
<feature type="binding site" description="via persulfide group" evidence="1">
    <location>
        <position position="401"/>
    </location>
    <ligand>
        <name>hybrid [4Fe-2O-2S] cluster</name>
        <dbReference type="ChEBI" id="CHEBI:60519"/>
    </ligand>
</feature>
<feature type="binding site" evidence="1">
    <location>
        <position position="429"/>
    </location>
    <ligand>
        <name>hybrid [4Fe-2O-2S] cluster</name>
        <dbReference type="ChEBI" id="CHEBI:60519"/>
    </ligand>
</feature>
<feature type="binding site" evidence="1">
    <location>
        <position position="454"/>
    </location>
    <ligand>
        <name>hybrid [4Fe-2O-2S] cluster</name>
        <dbReference type="ChEBI" id="CHEBI:60519"/>
    </ligand>
</feature>
<feature type="binding site" evidence="1">
    <location>
        <position position="489"/>
    </location>
    <ligand>
        <name>hybrid [4Fe-2O-2S] cluster</name>
        <dbReference type="ChEBI" id="CHEBI:60519"/>
    </ligand>
</feature>
<feature type="binding site" evidence="1">
    <location>
        <position position="491"/>
    </location>
    <ligand>
        <name>hybrid [4Fe-2O-2S] cluster</name>
        <dbReference type="ChEBI" id="CHEBI:60519"/>
    </ligand>
</feature>
<feature type="modified residue" description="Cysteine persulfide" evidence="1">
    <location>
        <position position="401"/>
    </location>
</feature>
<accession>A8ZYF3</accession>
<evidence type="ECO:0000255" key="1">
    <source>
        <dbReference type="HAMAP-Rule" id="MF_00069"/>
    </source>
</evidence>
<dbReference type="EC" id="1.7.99.1" evidence="1"/>
<dbReference type="EMBL" id="CP000859">
    <property type="protein sequence ID" value="ABW68678.1"/>
    <property type="molecule type" value="Genomic_DNA"/>
</dbReference>
<dbReference type="RefSeq" id="WP_012176289.1">
    <property type="nucleotide sequence ID" value="NC_009943.1"/>
</dbReference>
<dbReference type="SMR" id="A8ZYF3"/>
<dbReference type="STRING" id="96561.Dole_2875"/>
<dbReference type="KEGG" id="dol:Dole_2875"/>
<dbReference type="eggNOG" id="COG1151">
    <property type="taxonomic scope" value="Bacteria"/>
</dbReference>
<dbReference type="HOGENOM" id="CLU_038344_2_0_7"/>
<dbReference type="OrthoDB" id="9761526at2"/>
<dbReference type="Proteomes" id="UP000008561">
    <property type="component" value="Chromosome"/>
</dbReference>
<dbReference type="GO" id="GO:0005737">
    <property type="term" value="C:cytoplasm"/>
    <property type="evidence" value="ECO:0007669"/>
    <property type="project" value="UniProtKB-SubCell"/>
</dbReference>
<dbReference type="GO" id="GO:0051539">
    <property type="term" value="F:4 iron, 4 sulfur cluster binding"/>
    <property type="evidence" value="ECO:0007669"/>
    <property type="project" value="UniProtKB-KW"/>
</dbReference>
<dbReference type="GO" id="GO:0050418">
    <property type="term" value="F:hydroxylamine reductase activity"/>
    <property type="evidence" value="ECO:0007669"/>
    <property type="project" value="UniProtKB-UniRule"/>
</dbReference>
<dbReference type="GO" id="GO:0046872">
    <property type="term" value="F:metal ion binding"/>
    <property type="evidence" value="ECO:0007669"/>
    <property type="project" value="UniProtKB-KW"/>
</dbReference>
<dbReference type="GO" id="GO:0004601">
    <property type="term" value="F:peroxidase activity"/>
    <property type="evidence" value="ECO:0007669"/>
    <property type="project" value="TreeGrafter"/>
</dbReference>
<dbReference type="GO" id="GO:0042542">
    <property type="term" value="P:response to hydrogen peroxide"/>
    <property type="evidence" value="ECO:0007669"/>
    <property type="project" value="TreeGrafter"/>
</dbReference>
<dbReference type="CDD" id="cd01914">
    <property type="entry name" value="HCP"/>
    <property type="match status" value="1"/>
</dbReference>
<dbReference type="FunFam" id="3.40.50.2030:FF:000001">
    <property type="entry name" value="Hydroxylamine reductase"/>
    <property type="match status" value="1"/>
</dbReference>
<dbReference type="FunFam" id="3.40.50.2030:FF:000002">
    <property type="entry name" value="Hydroxylamine reductase"/>
    <property type="match status" value="1"/>
</dbReference>
<dbReference type="Gene3D" id="1.20.1270.20">
    <property type="match status" value="2"/>
</dbReference>
<dbReference type="Gene3D" id="3.40.50.2030">
    <property type="match status" value="2"/>
</dbReference>
<dbReference type="HAMAP" id="MF_00069">
    <property type="entry name" value="Hydroxylam_reduct"/>
    <property type="match status" value="1"/>
</dbReference>
<dbReference type="InterPro" id="IPR004137">
    <property type="entry name" value="HCP/CODH"/>
</dbReference>
<dbReference type="InterPro" id="IPR010048">
    <property type="entry name" value="Hydroxylam_reduct"/>
</dbReference>
<dbReference type="InterPro" id="IPR016099">
    <property type="entry name" value="Prismane-like_a/b-sand"/>
</dbReference>
<dbReference type="InterPro" id="IPR011254">
    <property type="entry name" value="Prismane-like_sf"/>
</dbReference>
<dbReference type="InterPro" id="IPR016100">
    <property type="entry name" value="Prismane_a-bundle"/>
</dbReference>
<dbReference type="NCBIfam" id="TIGR01703">
    <property type="entry name" value="hybrid_clust"/>
    <property type="match status" value="1"/>
</dbReference>
<dbReference type="NCBIfam" id="NF003658">
    <property type="entry name" value="PRK05290.1"/>
    <property type="match status" value="1"/>
</dbReference>
<dbReference type="PANTHER" id="PTHR30109">
    <property type="entry name" value="HYDROXYLAMINE REDUCTASE"/>
    <property type="match status" value="1"/>
</dbReference>
<dbReference type="PANTHER" id="PTHR30109:SF0">
    <property type="entry name" value="HYDROXYLAMINE REDUCTASE"/>
    <property type="match status" value="1"/>
</dbReference>
<dbReference type="Pfam" id="PF03063">
    <property type="entry name" value="Prismane"/>
    <property type="match status" value="1"/>
</dbReference>
<dbReference type="PIRSF" id="PIRSF000076">
    <property type="entry name" value="HCP"/>
    <property type="match status" value="1"/>
</dbReference>
<dbReference type="SUPFAM" id="SSF56821">
    <property type="entry name" value="Prismane protein-like"/>
    <property type="match status" value="1"/>
</dbReference>
<comment type="function">
    <text evidence="1">Catalyzes the reduction of hydroxylamine to form NH(3) and H(2)O.</text>
</comment>
<comment type="catalytic activity">
    <reaction evidence="1">
        <text>A + NH4(+) + H2O = hydroxylamine + AH2 + H(+)</text>
        <dbReference type="Rhea" id="RHEA:22052"/>
        <dbReference type="ChEBI" id="CHEBI:13193"/>
        <dbReference type="ChEBI" id="CHEBI:15377"/>
        <dbReference type="ChEBI" id="CHEBI:15378"/>
        <dbReference type="ChEBI" id="CHEBI:15429"/>
        <dbReference type="ChEBI" id="CHEBI:17499"/>
        <dbReference type="ChEBI" id="CHEBI:28938"/>
        <dbReference type="EC" id="1.7.99.1"/>
    </reaction>
</comment>
<comment type="cofactor">
    <cofactor evidence="1">
        <name>[4Fe-4S] cluster</name>
        <dbReference type="ChEBI" id="CHEBI:49883"/>
    </cofactor>
    <text evidence="1">Binds 1 [4Fe-4S] cluster.</text>
</comment>
<comment type="cofactor">
    <cofactor evidence="1">
        <name>hybrid [4Fe-2O-2S] cluster</name>
        <dbReference type="ChEBI" id="CHEBI:60519"/>
    </cofactor>
    <text evidence="1">Binds 1 hybrid [4Fe-2O-2S] cluster.</text>
</comment>
<comment type="subcellular location">
    <subcellularLocation>
        <location evidence="1">Cytoplasm</location>
    </subcellularLocation>
</comment>
<comment type="similarity">
    <text evidence="1">Belongs to the HCP family.</text>
</comment>
<name>HCP_DESOH</name>
<protein>
    <recommendedName>
        <fullName evidence="1">Hydroxylamine reductase</fullName>
        <ecNumber evidence="1">1.7.99.1</ecNumber>
    </recommendedName>
    <alternativeName>
        <fullName evidence="1">Hybrid-cluster protein</fullName>
        <shortName evidence="1">HCP</shortName>
    </alternativeName>
    <alternativeName>
        <fullName evidence="1">Prismane protein</fullName>
    </alternativeName>
</protein>
<organism>
    <name type="scientific">Desulfosudis oleivorans (strain DSM 6200 / JCM 39069 / Hxd3)</name>
    <name type="common">Desulfococcus oleovorans</name>
    <dbReference type="NCBI Taxonomy" id="96561"/>
    <lineage>
        <taxon>Bacteria</taxon>
        <taxon>Pseudomonadati</taxon>
        <taxon>Thermodesulfobacteriota</taxon>
        <taxon>Desulfobacteria</taxon>
        <taxon>Desulfobacterales</taxon>
        <taxon>Desulfosudaceae</taxon>
        <taxon>Desulfosudis</taxon>
    </lineage>
</organism>
<reference key="1">
    <citation type="submission" date="2007-10" db="EMBL/GenBank/DDBJ databases">
        <title>Complete sequence of Desulfococcus oleovorans Hxd3.</title>
        <authorList>
            <consortium name="US DOE Joint Genome Institute"/>
            <person name="Copeland A."/>
            <person name="Lucas S."/>
            <person name="Lapidus A."/>
            <person name="Barry K."/>
            <person name="Glavina del Rio T."/>
            <person name="Dalin E."/>
            <person name="Tice H."/>
            <person name="Pitluck S."/>
            <person name="Kiss H."/>
            <person name="Brettin T."/>
            <person name="Bruce D."/>
            <person name="Detter J.C."/>
            <person name="Han C."/>
            <person name="Schmutz J."/>
            <person name="Larimer F."/>
            <person name="Land M."/>
            <person name="Hauser L."/>
            <person name="Kyrpides N."/>
            <person name="Kim E."/>
            <person name="Wawrik B."/>
            <person name="Richardson P."/>
        </authorList>
    </citation>
    <scope>NUCLEOTIDE SEQUENCE [LARGE SCALE GENOMIC DNA]</scope>
    <source>
        <strain>DSM 6200 / JCM 39069 / Hxd3</strain>
    </source>
</reference>
<gene>
    <name evidence="1" type="primary">hcp</name>
    <name type="ordered locus">Dole_2875</name>
</gene>